<dbReference type="EMBL" id="CP000348">
    <property type="protein sequence ID" value="ABJ78920.1"/>
    <property type="molecule type" value="Genomic_DNA"/>
</dbReference>
<dbReference type="RefSeq" id="WP_011670123.1">
    <property type="nucleotide sequence ID" value="NC_008508.1"/>
</dbReference>
<dbReference type="SMR" id="Q051S5"/>
<dbReference type="KEGG" id="lbl:LBL_1431"/>
<dbReference type="HOGENOM" id="CLU_014841_3_2_12"/>
<dbReference type="GO" id="GO:0005737">
    <property type="term" value="C:cytoplasm"/>
    <property type="evidence" value="ECO:0007669"/>
    <property type="project" value="UniProtKB-SubCell"/>
</dbReference>
<dbReference type="GO" id="GO:0009380">
    <property type="term" value="C:excinuclease repair complex"/>
    <property type="evidence" value="ECO:0007669"/>
    <property type="project" value="InterPro"/>
</dbReference>
<dbReference type="GO" id="GO:0003677">
    <property type="term" value="F:DNA binding"/>
    <property type="evidence" value="ECO:0007669"/>
    <property type="project" value="UniProtKB-UniRule"/>
</dbReference>
<dbReference type="GO" id="GO:0009381">
    <property type="term" value="F:excinuclease ABC activity"/>
    <property type="evidence" value="ECO:0007669"/>
    <property type="project" value="UniProtKB-UniRule"/>
</dbReference>
<dbReference type="GO" id="GO:0006289">
    <property type="term" value="P:nucleotide-excision repair"/>
    <property type="evidence" value="ECO:0007669"/>
    <property type="project" value="UniProtKB-UniRule"/>
</dbReference>
<dbReference type="GO" id="GO:0009432">
    <property type="term" value="P:SOS response"/>
    <property type="evidence" value="ECO:0007669"/>
    <property type="project" value="UniProtKB-UniRule"/>
</dbReference>
<dbReference type="CDD" id="cd10434">
    <property type="entry name" value="GIY-YIG_UvrC_Cho"/>
    <property type="match status" value="1"/>
</dbReference>
<dbReference type="FunFam" id="3.40.1440.10:FF:000001">
    <property type="entry name" value="UvrABC system protein C"/>
    <property type="match status" value="1"/>
</dbReference>
<dbReference type="Gene3D" id="1.10.150.20">
    <property type="entry name" value="5' to 3' exonuclease, C-terminal subdomain"/>
    <property type="match status" value="1"/>
</dbReference>
<dbReference type="Gene3D" id="3.40.1440.10">
    <property type="entry name" value="GIY-YIG endonuclease"/>
    <property type="match status" value="1"/>
</dbReference>
<dbReference type="Gene3D" id="3.30.420.340">
    <property type="entry name" value="UvrC, RNAse H endonuclease domain"/>
    <property type="match status" value="1"/>
</dbReference>
<dbReference type="HAMAP" id="MF_00203">
    <property type="entry name" value="UvrC"/>
    <property type="match status" value="1"/>
</dbReference>
<dbReference type="InterPro" id="IPR000305">
    <property type="entry name" value="GIY-YIG_endonuc"/>
</dbReference>
<dbReference type="InterPro" id="IPR035901">
    <property type="entry name" value="GIY-YIG_endonuc_sf"/>
</dbReference>
<dbReference type="InterPro" id="IPR047296">
    <property type="entry name" value="GIY-YIG_UvrC_Cho"/>
</dbReference>
<dbReference type="InterPro" id="IPR003583">
    <property type="entry name" value="Hlx-hairpin-Hlx_DNA-bd_motif"/>
</dbReference>
<dbReference type="InterPro" id="IPR010994">
    <property type="entry name" value="RuvA_2-like"/>
</dbReference>
<dbReference type="InterPro" id="IPR001943">
    <property type="entry name" value="UVR_dom"/>
</dbReference>
<dbReference type="InterPro" id="IPR036876">
    <property type="entry name" value="UVR_dom_sf"/>
</dbReference>
<dbReference type="InterPro" id="IPR050066">
    <property type="entry name" value="UvrABC_protein_C"/>
</dbReference>
<dbReference type="InterPro" id="IPR004791">
    <property type="entry name" value="UvrC"/>
</dbReference>
<dbReference type="InterPro" id="IPR001162">
    <property type="entry name" value="UvrC_RNase_H_dom"/>
</dbReference>
<dbReference type="InterPro" id="IPR038476">
    <property type="entry name" value="UvrC_RNase_H_dom_sf"/>
</dbReference>
<dbReference type="NCBIfam" id="NF001824">
    <property type="entry name" value="PRK00558.1-5"/>
    <property type="match status" value="1"/>
</dbReference>
<dbReference type="NCBIfam" id="TIGR00194">
    <property type="entry name" value="uvrC"/>
    <property type="match status" value="1"/>
</dbReference>
<dbReference type="PANTHER" id="PTHR30562:SF1">
    <property type="entry name" value="UVRABC SYSTEM PROTEIN C"/>
    <property type="match status" value="1"/>
</dbReference>
<dbReference type="PANTHER" id="PTHR30562">
    <property type="entry name" value="UVRC/OXIDOREDUCTASE"/>
    <property type="match status" value="1"/>
</dbReference>
<dbReference type="Pfam" id="PF01541">
    <property type="entry name" value="GIY-YIG"/>
    <property type="match status" value="1"/>
</dbReference>
<dbReference type="Pfam" id="PF14520">
    <property type="entry name" value="HHH_5"/>
    <property type="match status" value="1"/>
</dbReference>
<dbReference type="Pfam" id="PF02151">
    <property type="entry name" value="UVR"/>
    <property type="match status" value="1"/>
</dbReference>
<dbReference type="Pfam" id="PF22920">
    <property type="entry name" value="UvrC_RNaseH"/>
    <property type="match status" value="1"/>
</dbReference>
<dbReference type="Pfam" id="PF08459">
    <property type="entry name" value="UvrC_RNaseH_dom"/>
    <property type="match status" value="1"/>
</dbReference>
<dbReference type="SMART" id="SM00465">
    <property type="entry name" value="GIYc"/>
    <property type="match status" value="1"/>
</dbReference>
<dbReference type="SMART" id="SM00278">
    <property type="entry name" value="HhH1"/>
    <property type="match status" value="2"/>
</dbReference>
<dbReference type="SUPFAM" id="SSF46600">
    <property type="entry name" value="C-terminal UvrC-binding domain of UvrB"/>
    <property type="match status" value="1"/>
</dbReference>
<dbReference type="SUPFAM" id="SSF82771">
    <property type="entry name" value="GIY-YIG endonuclease"/>
    <property type="match status" value="1"/>
</dbReference>
<dbReference type="SUPFAM" id="SSF47781">
    <property type="entry name" value="RuvA domain 2-like"/>
    <property type="match status" value="1"/>
</dbReference>
<dbReference type="PROSITE" id="PS50164">
    <property type="entry name" value="GIY_YIG"/>
    <property type="match status" value="1"/>
</dbReference>
<dbReference type="PROSITE" id="PS50151">
    <property type="entry name" value="UVR"/>
    <property type="match status" value="1"/>
</dbReference>
<dbReference type="PROSITE" id="PS50165">
    <property type="entry name" value="UVRC"/>
    <property type="match status" value="1"/>
</dbReference>
<feature type="chain" id="PRO_1000077804" description="UvrABC system protein C">
    <location>
        <begin position="1"/>
        <end position="609"/>
    </location>
</feature>
<feature type="domain" description="GIY-YIG" evidence="1">
    <location>
        <begin position="19"/>
        <end position="97"/>
    </location>
</feature>
<feature type="domain" description="UVR" evidence="1">
    <location>
        <begin position="208"/>
        <end position="243"/>
    </location>
</feature>
<accession>Q051S5</accession>
<reference key="1">
    <citation type="journal article" date="2006" name="Proc. Natl. Acad. Sci. U.S.A.">
        <title>Genome reduction in Leptospira borgpetersenii reflects limited transmission potential.</title>
        <authorList>
            <person name="Bulach D.M."/>
            <person name="Zuerner R.L."/>
            <person name="Wilson P."/>
            <person name="Seemann T."/>
            <person name="McGrath A."/>
            <person name="Cullen P.A."/>
            <person name="Davis J."/>
            <person name="Johnson M."/>
            <person name="Kuczek E."/>
            <person name="Alt D.P."/>
            <person name="Peterson-Burch B."/>
            <person name="Coppel R.L."/>
            <person name="Rood J.I."/>
            <person name="Davies J.K."/>
            <person name="Adler B."/>
        </authorList>
    </citation>
    <scope>NUCLEOTIDE SEQUENCE [LARGE SCALE GENOMIC DNA]</scope>
    <source>
        <strain>L550</strain>
    </source>
</reference>
<name>UVRC_LEPBL</name>
<protein>
    <recommendedName>
        <fullName evidence="1">UvrABC system protein C</fullName>
        <shortName evidence="1">Protein UvrC</shortName>
    </recommendedName>
    <alternativeName>
        <fullName evidence="1">Excinuclease ABC subunit C</fullName>
    </alternativeName>
</protein>
<keyword id="KW-0963">Cytoplasm</keyword>
<keyword id="KW-0227">DNA damage</keyword>
<keyword id="KW-0228">DNA excision</keyword>
<keyword id="KW-0234">DNA repair</keyword>
<keyword id="KW-0267">Excision nuclease</keyword>
<keyword id="KW-0742">SOS response</keyword>
<proteinExistence type="inferred from homology"/>
<comment type="function">
    <text evidence="1">The UvrABC repair system catalyzes the recognition and processing of DNA lesions. UvrC both incises the 5' and 3' sides of the lesion. The N-terminal half is responsible for the 3' incision and the C-terminal half is responsible for the 5' incision.</text>
</comment>
<comment type="subunit">
    <text evidence="1">Interacts with UvrB in an incision complex.</text>
</comment>
<comment type="subcellular location">
    <subcellularLocation>
        <location evidence="1">Cytoplasm</location>
    </subcellularLocation>
</comment>
<comment type="similarity">
    <text evidence="1">Belongs to the UvrC family.</text>
</comment>
<evidence type="ECO:0000255" key="1">
    <source>
        <dbReference type="HAMAP-Rule" id="MF_00203"/>
    </source>
</evidence>
<gene>
    <name evidence="1" type="primary">uvrC</name>
    <name type="ordered locus">LBL_1431</name>
</gene>
<organism>
    <name type="scientific">Leptospira borgpetersenii serovar Hardjo-bovis (strain L550)</name>
    <dbReference type="NCBI Taxonomy" id="355276"/>
    <lineage>
        <taxon>Bacteria</taxon>
        <taxon>Pseudomonadati</taxon>
        <taxon>Spirochaetota</taxon>
        <taxon>Spirochaetia</taxon>
        <taxon>Leptospirales</taxon>
        <taxon>Leptospiraceae</taxon>
        <taxon>Leptospira</taxon>
    </lineage>
</organism>
<sequence length="609" mass="69680">MPEILNHILILEKIKNLGISPGCYLWKSRKGEVLYIGKAKNLDKRVRNYLKENHPDIKTRALQKEIFDLDWIATGTEKEALILEATLIKKHNPRFNVRFKDDKKYPYICVSLSESFPMVYITRKLKDNGDRYFGPYSDVKSTRETLDIILRIFPVRKTRQVLPLPKPRRPCLNFDMGRCLGPCQGNIPVEDYKIVIDQVIQFLEGKKESLVGDLSIKMSASSNRMDFEKAARYRDMLQRIQNFREKQTVVSAEGGDEDVIGFARKKDEGQVILLEVRGGRLETKKSFPIQGVLDAEDSEILGAFFRDYYLNAALVPPLIFVPADIQEETAAVMDVLQEKTGFRPKLKSPRGGDKRSLLKIAEKNAELGLTERLLATHYRDQTASLKEIQEMFSLEHPPHIIECYDISHFQGSEPVASGVMFVEGKPFKQGYRKYNIRGYKGINDPGMIHEVISRRLQRIANEESVFPDLIVIDGGPTQLAKACEAAMEAGAERIPMIGLAKKREEIYFPGDNEPFIFDMNSSGMKLLRHLRDEAHRFGVSHHRSRRNKETMRSLIQNVPDIGLKRSKLLLRHFSGEKKIEDATKEELLAVPGIGENLAEKILKRIRKKE</sequence>